<reference key="1">
    <citation type="submission" date="2007-10" db="EMBL/GenBank/DDBJ databases">
        <title>Complete genome of Alkaliphilus oremlandii OhILAs.</title>
        <authorList>
            <person name="Copeland A."/>
            <person name="Lucas S."/>
            <person name="Lapidus A."/>
            <person name="Barry K."/>
            <person name="Detter J.C."/>
            <person name="Glavina del Rio T."/>
            <person name="Hammon N."/>
            <person name="Israni S."/>
            <person name="Dalin E."/>
            <person name="Tice H."/>
            <person name="Pitluck S."/>
            <person name="Chain P."/>
            <person name="Malfatti S."/>
            <person name="Shin M."/>
            <person name="Vergez L."/>
            <person name="Schmutz J."/>
            <person name="Larimer F."/>
            <person name="Land M."/>
            <person name="Hauser L."/>
            <person name="Kyrpides N."/>
            <person name="Mikhailova N."/>
            <person name="Stolz J.F."/>
            <person name="Dawson A."/>
            <person name="Fisher E."/>
            <person name="Crable B."/>
            <person name="Perera E."/>
            <person name="Lisak J."/>
            <person name="Ranganathan M."/>
            <person name="Basu P."/>
            <person name="Richardson P."/>
        </authorList>
    </citation>
    <scope>NUCLEOTIDE SEQUENCE [LARGE SCALE GENOMIC DNA]</scope>
    <source>
        <strain>OhILAs</strain>
    </source>
</reference>
<feature type="chain" id="PRO_0000365841" description="ATP synthase subunit c">
    <location>
        <begin position="1"/>
        <end position="88"/>
    </location>
</feature>
<feature type="transmembrane region" description="Helical" evidence="1">
    <location>
        <begin position="10"/>
        <end position="30"/>
    </location>
</feature>
<feature type="transmembrane region" description="Helical" evidence="1">
    <location>
        <begin position="68"/>
        <end position="88"/>
    </location>
</feature>
<feature type="site" description="Reversibly protonated during proton transport" evidence="1">
    <location>
        <position position="65"/>
    </location>
</feature>
<accession>A8MJW4</accession>
<gene>
    <name evidence="1" type="primary">atpE</name>
    <name type="ordered locus">Clos_2565</name>
</gene>
<name>ATPL_ALKOO</name>
<sequence length="88" mass="8752">MEGITGKELILAASAIGAGLAMIAGLGPGIGQGIAAGKGAEAVGRQPEAQGDILRTMLLGQAVAETTGIYSLVIALILLFANPLIRLL</sequence>
<comment type="function">
    <text evidence="1">F(1)F(0) ATP synthase produces ATP from ADP in the presence of a proton or sodium gradient. F-type ATPases consist of two structural domains, F(1) containing the extramembraneous catalytic core and F(0) containing the membrane proton channel, linked together by a central stalk and a peripheral stalk. During catalysis, ATP synthesis in the catalytic domain of F(1) is coupled via a rotary mechanism of the central stalk subunits to proton translocation.</text>
</comment>
<comment type="function">
    <text evidence="1">Key component of the F(0) channel; it plays a direct role in translocation across the membrane. A homomeric c-ring of between 10-14 subunits forms the central stalk rotor element with the F(1) delta and epsilon subunits.</text>
</comment>
<comment type="subunit">
    <text evidence="1">F-type ATPases have 2 components, F(1) - the catalytic core - and F(0) - the membrane proton channel. F(1) has five subunits: alpha(3), beta(3), gamma(1), delta(1), epsilon(1). F(0) has three main subunits: a(1), b(2) and c(10-14). The alpha and beta chains form an alternating ring which encloses part of the gamma chain. F(1) is attached to F(0) by a central stalk formed by the gamma and epsilon chains, while a peripheral stalk is formed by the delta and b chains.</text>
</comment>
<comment type="subcellular location">
    <subcellularLocation>
        <location evidence="1">Cell membrane</location>
        <topology evidence="1">Multi-pass membrane protein</topology>
    </subcellularLocation>
</comment>
<comment type="similarity">
    <text evidence="1">Belongs to the ATPase C chain family.</text>
</comment>
<proteinExistence type="inferred from homology"/>
<protein>
    <recommendedName>
        <fullName evidence="1">ATP synthase subunit c</fullName>
    </recommendedName>
    <alternativeName>
        <fullName evidence="1">ATP synthase F(0) sector subunit c</fullName>
    </alternativeName>
    <alternativeName>
        <fullName evidence="1">F-type ATPase subunit c</fullName>
        <shortName evidence="1">F-ATPase subunit c</shortName>
    </alternativeName>
    <alternativeName>
        <fullName evidence="1">Lipid-binding protein</fullName>
    </alternativeName>
</protein>
<evidence type="ECO:0000255" key="1">
    <source>
        <dbReference type="HAMAP-Rule" id="MF_01396"/>
    </source>
</evidence>
<keyword id="KW-0066">ATP synthesis</keyword>
<keyword id="KW-1003">Cell membrane</keyword>
<keyword id="KW-0138">CF(0)</keyword>
<keyword id="KW-0375">Hydrogen ion transport</keyword>
<keyword id="KW-0406">Ion transport</keyword>
<keyword id="KW-0446">Lipid-binding</keyword>
<keyword id="KW-0472">Membrane</keyword>
<keyword id="KW-1185">Reference proteome</keyword>
<keyword id="KW-0812">Transmembrane</keyword>
<keyword id="KW-1133">Transmembrane helix</keyword>
<keyword id="KW-0813">Transport</keyword>
<organism>
    <name type="scientific">Alkaliphilus oremlandii (strain OhILAs)</name>
    <name type="common">Clostridium oremlandii (strain OhILAs)</name>
    <dbReference type="NCBI Taxonomy" id="350688"/>
    <lineage>
        <taxon>Bacteria</taxon>
        <taxon>Bacillati</taxon>
        <taxon>Bacillota</taxon>
        <taxon>Clostridia</taxon>
        <taxon>Peptostreptococcales</taxon>
        <taxon>Natronincolaceae</taxon>
        <taxon>Alkaliphilus</taxon>
    </lineage>
</organism>
<dbReference type="EMBL" id="CP000853">
    <property type="protein sequence ID" value="ABW20096.1"/>
    <property type="molecule type" value="Genomic_DNA"/>
</dbReference>
<dbReference type="RefSeq" id="WP_012160403.1">
    <property type="nucleotide sequence ID" value="NC_009922.1"/>
</dbReference>
<dbReference type="SMR" id="A8MJW4"/>
<dbReference type="STRING" id="350688.Clos_2565"/>
<dbReference type="KEGG" id="aoe:Clos_2565"/>
<dbReference type="eggNOG" id="COG0636">
    <property type="taxonomic scope" value="Bacteria"/>
</dbReference>
<dbReference type="HOGENOM" id="CLU_148047_2_1_9"/>
<dbReference type="OrthoDB" id="9810379at2"/>
<dbReference type="Proteomes" id="UP000000269">
    <property type="component" value="Chromosome"/>
</dbReference>
<dbReference type="GO" id="GO:0005886">
    <property type="term" value="C:plasma membrane"/>
    <property type="evidence" value="ECO:0007669"/>
    <property type="project" value="UniProtKB-SubCell"/>
</dbReference>
<dbReference type="GO" id="GO:0045259">
    <property type="term" value="C:proton-transporting ATP synthase complex"/>
    <property type="evidence" value="ECO:0007669"/>
    <property type="project" value="UniProtKB-KW"/>
</dbReference>
<dbReference type="GO" id="GO:0033177">
    <property type="term" value="C:proton-transporting two-sector ATPase complex, proton-transporting domain"/>
    <property type="evidence" value="ECO:0007669"/>
    <property type="project" value="InterPro"/>
</dbReference>
<dbReference type="GO" id="GO:0008289">
    <property type="term" value="F:lipid binding"/>
    <property type="evidence" value="ECO:0007669"/>
    <property type="project" value="UniProtKB-KW"/>
</dbReference>
<dbReference type="GO" id="GO:0046933">
    <property type="term" value="F:proton-transporting ATP synthase activity, rotational mechanism"/>
    <property type="evidence" value="ECO:0007669"/>
    <property type="project" value="UniProtKB-UniRule"/>
</dbReference>
<dbReference type="CDD" id="cd18184">
    <property type="entry name" value="ATP-synt_Fo_c_NaATPase"/>
    <property type="match status" value="1"/>
</dbReference>
<dbReference type="FunFam" id="1.20.20.10:FF:000002">
    <property type="entry name" value="ATP synthase subunit c"/>
    <property type="match status" value="1"/>
</dbReference>
<dbReference type="Gene3D" id="1.20.120.610">
    <property type="entry name" value="lithium bound rotor ring of v- atpase"/>
    <property type="match status" value="1"/>
</dbReference>
<dbReference type="HAMAP" id="MF_01396">
    <property type="entry name" value="ATP_synth_c_bact"/>
    <property type="match status" value="1"/>
</dbReference>
<dbReference type="InterPro" id="IPR005953">
    <property type="entry name" value="ATP_synth_csu_bac/chlpt"/>
</dbReference>
<dbReference type="InterPro" id="IPR000454">
    <property type="entry name" value="ATP_synth_F0_csu"/>
</dbReference>
<dbReference type="InterPro" id="IPR020537">
    <property type="entry name" value="ATP_synth_F0_csu_DDCD_BS"/>
</dbReference>
<dbReference type="InterPro" id="IPR002379">
    <property type="entry name" value="ATPase_proteolipid_c-like_dom"/>
</dbReference>
<dbReference type="InterPro" id="IPR035921">
    <property type="entry name" value="F/V-ATP_Csub_sf"/>
</dbReference>
<dbReference type="NCBIfam" id="TIGR01260">
    <property type="entry name" value="ATP_synt_c"/>
    <property type="match status" value="1"/>
</dbReference>
<dbReference type="PANTHER" id="PTHR10031">
    <property type="entry name" value="ATP SYNTHASE LIPID-BINDING PROTEIN, MITOCHONDRIAL"/>
    <property type="match status" value="1"/>
</dbReference>
<dbReference type="PANTHER" id="PTHR10031:SF0">
    <property type="entry name" value="ATPASE PROTEIN 9"/>
    <property type="match status" value="1"/>
</dbReference>
<dbReference type="Pfam" id="PF00137">
    <property type="entry name" value="ATP-synt_C"/>
    <property type="match status" value="1"/>
</dbReference>
<dbReference type="PRINTS" id="PR00124">
    <property type="entry name" value="ATPASEC"/>
</dbReference>
<dbReference type="SUPFAM" id="SSF81333">
    <property type="entry name" value="F1F0 ATP synthase subunit C"/>
    <property type="match status" value="1"/>
</dbReference>
<dbReference type="PROSITE" id="PS00605">
    <property type="entry name" value="ATPASE_C"/>
    <property type="match status" value="1"/>
</dbReference>